<organism>
    <name type="scientific">Albidiferax ferrireducens (strain ATCC BAA-621 / DSM 15236 / T118)</name>
    <name type="common">Rhodoferax ferrireducens</name>
    <dbReference type="NCBI Taxonomy" id="338969"/>
    <lineage>
        <taxon>Bacteria</taxon>
        <taxon>Pseudomonadati</taxon>
        <taxon>Pseudomonadota</taxon>
        <taxon>Betaproteobacteria</taxon>
        <taxon>Burkholderiales</taxon>
        <taxon>Comamonadaceae</taxon>
        <taxon>Rhodoferax</taxon>
    </lineage>
</organism>
<evidence type="ECO:0000255" key="1">
    <source>
        <dbReference type="HAMAP-Rule" id="MF_01043"/>
    </source>
</evidence>
<accession>Q21UZ2</accession>
<reference key="1">
    <citation type="submission" date="2006-02" db="EMBL/GenBank/DDBJ databases">
        <title>Complete sequence of chromosome of Rhodoferax ferrireducens DSM 15236.</title>
        <authorList>
            <person name="Copeland A."/>
            <person name="Lucas S."/>
            <person name="Lapidus A."/>
            <person name="Barry K."/>
            <person name="Detter J.C."/>
            <person name="Glavina del Rio T."/>
            <person name="Hammon N."/>
            <person name="Israni S."/>
            <person name="Pitluck S."/>
            <person name="Brettin T."/>
            <person name="Bruce D."/>
            <person name="Han C."/>
            <person name="Tapia R."/>
            <person name="Gilna P."/>
            <person name="Kiss H."/>
            <person name="Schmutz J."/>
            <person name="Larimer F."/>
            <person name="Land M."/>
            <person name="Kyrpides N."/>
            <person name="Ivanova N."/>
            <person name="Richardson P."/>
        </authorList>
    </citation>
    <scope>NUCLEOTIDE SEQUENCE [LARGE SCALE GENOMIC DNA]</scope>
    <source>
        <strain>ATCC BAA-621 / DSM 15236 / T118</strain>
    </source>
</reference>
<dbReference type="EC" id="2.3.1.275" evidence="1"/>
<dbReference type="EMBL" id="CP000267">
    <property type="protein sequence ID" value="ABD70411.1"/>
    <property type="molecule type" value="Genomic_DNA"/>
</dbReference>
<dbReference type="SMR" id="Q21UZ2"/>
<dbReference type="STRING" id="338969.Rfer_2695"/>
<dbReference type="KEGG" id="rfr:Rfer_2695"/>
<dbReference type="eggNOG" id="COG0344">
    <property type="taxonomic scope" value="Bacteria"/>
</dbReference>
<dbReference type="HOGENOM" id="CLU_081254_0_0_4"/>
<dbReference type="UniPathway" id="UPA00085"/>
<dbReference type="Proteomes" id="UP000008332">
    <property type="component" value="Chromosome"/>
</dbReference>
<dbReference type="GO" id="GO:0005886">
    <property type="term" value="C:plasma membrane"/>
    <property type="evidence" value="ECO:0007669"/>
    <property type="project" value="UniProtKB-SubCell"/>
</dbReference>
<dbReference type="GO" id="GO:0043772">
    <property type="term" value="F:acyl-phosphate glycerol-3-phosphate acyltransferase activity"/>
    <property type="evidence" value="ECO:0007669"/>
    <property type="project" value="UniProtKB-UniRule"/>
</dbReference>
<dbReference type="GO" id="GO:0008654">
    <property type="term" value="P:phospholipid biosynthetic process"/>
    <property type="evidence" value="ECO:0007669"/>
    <property type="project" value="UniProtKB-UniRule"/>
</dbReference>
<dbReference type="HAMAP" id="MF_01043">
    <property type="entry name" value="PlsY"/>
    <property type="match status" value="1"/>
</dbReference>
<dbReference type="InterPro" id="IPR003811">
    <property type="entry name" value="G3P_acylTferase_PlsY"/>
</dbReference>
<dbReference type="NCBIfam" id="TIGR00023">
    <property type="entry name" value="glycerol-3-phosphate 1-O-acyltransferase PlsY"/>
    <property type="match status" value="1"/>
</dbReference>
<dbReference type="PANTHER" id="PTHR30309:SF0">
    <property type="entry name" value="GLYCEROL-3-PHOSPHATE ACYLTRANSFERASE-RELATED"/>
    <property type="match status" value="1"/>
</dbReference>
<dbReference type="PANTHER" id="PTHR30309">
    <property type="entry name" value="INNER MEMBRANE PROTEIN YGIH"/>
    <property type="match status" value="1"/>
</dbReference>
<dbReference type="Pfam" id="PF02660">
    <property type="entry name" value="G3P_acyltransf"/>
    <property type="match status" value="1"/>
</dbReference>
<dbReference type="SMART" id="SM01207">
    <property type="entry name" value="G3P_acyltransf"/>
    <property type="match status" value="1"/>
</dbReference>
<name>PLSY_ALBFT</name>
<proteinExistence type="inferred from homology"/>
<keyword id="KW-0997">Cell inner membrane</keyword>
<keyword id="KW-1003">Cell membrane</keyword>
<keyword id="KW-0444">Lipid biosynthesis</keyword>
<keyword id="KW-0443">Lipid metabolism</keyword>
<keyword id="KW-0472">Membrane</keyword>
<keyword id="KW-0594">Phospholipid biosynthesis</keyword>
<keyword id="KW-1208">Phospholipid metabolism</keyword>
<keyword id="KW-1185">Reference proteome</keyword>
<keyword id="KW-0808">Transferase</keyword>
<keyword id="KW-0812">Transmembrane</keyword>
<keyword id="KW-1133">Transmembrane helix</keyword>
<feature type="chain" id="PRO_0000250324" description="Glycerol-3-phosphate acyltransferase">
    <location>
        <begin position="1"/>
        <end position="224"/>
    </location>
</feature>
<feature type="transmembrane region" description="Helical" evidence="1">
    <location>
        <begin position="14"/>
        <end position="34"/>
    </location>
</feature>
<feature type="transmembrane region" description="Helical" evidence="1">
    <location>
        <begin position="64"/>
        <end position="84"/>
    </location>
</feature>
<feature type="transmembrane region" description="Helical" evidence="1">
    <location>
        <begin position="98"/>
        <end position="118"/>
    </location>
</feature>
<feature type="transmembrane region" description="Helical" evidence="1">
    <location>
        <begin position="127"/>
        <end position="147"/>
    </location>
</feature>
<feature type="transmembrane region" description="Helical" evidence="1">
    <location>
        <begin position="160"/>
        <end position="180"/>
    </location>
</feature>
<gene>
    <name evidence="1" type="primary">plsY</name>
    <name type="ordered locus">Rfer_2695</name>
</gene>
<protein>
    <recommendedName>
        <fullName evidence="1">Glycerol-3-phosphate acyltransferase</fullName>
    </recommendedName>
    <alternativeName>
        <fullName evidence="1">Acyl-PO4 G3P acyltransferase</fullName>
    </alternativeName>
    <alternativeName>
        <fullName evidence="1">Acyl-phosphate--glycerol-3-phosphate acyltransferase</fullName>
    </alternativeName>
    <alternativeName>
        <fullName evidence="1">G3P acyltransferase</fullName>
        <shortName evidence="1">GPAT</shortName>
        <ecNumber evidence="1">2.3.1.275</ecNumber>
    </alternativeName>
    <alternativeName>
        <fullName evidence="1">Lysophosphatidic acid synthase</fullName>
        <shortName evidence="1">LPA synthase</shortName>
    </alternativeName>
</protein>
<comment type="function">
    <text evidence="1">Catalyzes the transfer of an acyl group from acyl-phosphate (acyl-PO(4)) to glycerol-3-phosphate (G3P) to form lysophosphatidic acid (LPA). This enzyme utilizes acyl-phosphate as fatty acyl donor, but not acyl-CoA or acyl-ACP.</text>
</comment>
<comment type="catalytic activity">
    <reaction evidence="1">
        <text>an acyl phosphate + sn-glycerol 3-phosphate = a 1-acyl-sn-glycero-3-phosphate + phosphate</text>
        <dbReference type="Rhea" id="RHEA:34075"/>
        <dbReference type="ChEBI" id="CHEBI:43474"/>
        <dbReference type="ChEBI" id="CHEBI:57597"/>
        <dbReference type="ChEBI" id="CHEBI:57970"/>
        <dbReference type="ChEBI" id="CHEBI:59918"/>
        <dbReference type="EC" id="2.3.1.275"/>
    </reaction>
</comment>
<comment type="pathway">
    <text evidence="1">Lipid metabolism; phospholipid metabolism.</text>
</comment>
<comment type="subunit">
    <text evidence="1">Probably interacts with PlsX.</text>
</comment>
<comment type="subcellular location">
    <subcellularLocation>
        <location evidence="1">Cell inner membrane</location>
        <topology evidence="1">Multi-pass membrane protein</topology>
    </subcellularLocation>
</comment>
<comment type="similarity">
    <text evidence="1">Belongs to the PlsY family.</text>
</comment>
<sequence length="224" mass="24237">MRQQENFLESMQSFFPLAATLLGYLIGSLSFAVIVSRVMGLNDPRTFGSKNPGATNVLRSGSKTAAIVTLLLDAAKGWLPVMLVRWYGKPYGMEEGTMALVGLAAFIGHLYPVFFNFAGGKGVATALGVLLGLSPILALATGATWLIMAYFFRYVSLASLTAAVFVPVYYVFGDGMAWYLSKGVLAALCAMSLLLIYRHAENISRLIKGTESRLGKKARTERKS</sequence>